<reference key="1">
    <citation type="submission" date="2006-08" db="EMBL/GenBank/DDBJ databases">
        <title>Complete sequence of Maricaulis maris MCS10.</title>
        <authorList>
            <consortium name="US DOE Joint Genome Institute"/>
            <person name="Copeland A."/>
            <person name="Lucas S."/>
            <person name="Lapidus A."/>
            <person name="Barry K."/>
            <person name="Detter J.C."/>
            <person name="Glavina del Rio T."/>
            <person name="Hammon N."/>
            <person name="Israni S."/>
            <person name="Dalin E."/>
            <person name="Tice H."/>
            <person name="Pitluck S."/>
            <person name="Saunders E."/>
            <person name="Brettin T."/>
            <person name="Bruce D."/>
            <person name="Han C."/>
            <person name="Tapia R."/>
            <person name="Gilna P."/>
            <person name="Schmutz J."/>
            <person name="Larimer F."/>
            <person name="Land M."/>
            <person name="Hauser L."/>
            <person name="Kyrpides N."/>
            <person name="Mikhailova N."/>
            <person name="Viollier P."/>
            <person name="Stephens C."/>
            <person name="Richardson P."/>
        </authorList>
    </citation>
    <scope>NUCLEOTIDE SEQUENCE [LARGE SCALE GENOMIC DNA]</scope>
    <source>
        <strain>MCS10</strain>
    </source>
</reference>
<sequence length="251" mass="26678">MIRKLAALIVAAAALQACAVSDRLSYVGQTPPMTPIQNPADLAGTGPSQLPMPMPRMPQQRYATNSTANNSLWTANSPTFFGDPRADQVGDIVTVNIAISDSAQLNNTTNRSRSSAEDSDLTSFLGADLTGFFNDNIDPTSMTSLGSTSSLAGSGSVNRTESISLTVAALVTQVLPNGNLVIAGRQEVRVNNEVRELLITGIARPQDIGSDNTIAHTQIAEARISYGGRGHLSDAQRPRYGQELYDILMPF</sequence>
<gene>
    <name evidence="1" type="primary">flgH</name>
    <name type="ordered locus">Mmar10_1949</name>
</gene>
<organism>
    <name type="scientific">Maricaulis maris (strain MCS10)</name>
    <name type="common">Caulobacter maris</name>
    <dbReference type="NCBI Taxonomy" id="394221"/>
    <lineage>
        <taxon>Bacteria</taxon>
        <taxon>Pseudomonadati</taxon>
        <taxon>Pseudomonadota</taxon>
        <taxon>Alphaproteobacteria</taxon>
        <taxon>Maricaulales</taxon>
        <taxon>Maricaulaceae</taxon>
        <taxon>Maricaulis</taxon>
    </lineage>
</organism>
<proteinExistence type="inferred from homology"/>
<accession>Q0AN96</accession>
<evidence type="ECO:0000255" key="1">
    <source>
        <dbReference type="HAMAP-Rule" id="MF_00415"/>
    </source>
</evidence>
<name>FLGH_MARMM</name>
<protein>
    <recommendedName>
        <fullName evidence="1">Flagellar L-ring protein</fullName>
    </recommendedName>
    <alternativeName>
        <fullName evidence="1">Basal body L-ring protein</fullName>
    </alternativeName>
</protein>
<keyword id="KW-0975">Bacterial flagellum</keyword>
<keyword id="KW-0998">Cell outer membrane</keyword>
<keyword id="KW-0449">Lipoprotein</keyword>
<keyword id="KW-0472">Membrane</keyword>
<keyword id="KW-0564">Palmitate</keyword>
<keyword id="KW-1185">Reference proteome</keyword>
<keyword id="KW-0732">Signal</keyword>
<comment type="function">
    <text evidence="1">Assembles around the rod to form the L-ring and probably protects the motor/basal body from shearing forces during rotation.</text>
</comment>
<comment type="subunit">
    <text evidence="1">The basal body constitutes a major portion of the flagellar organelle and consists of four rings (L,P,S, and M) mounted on a central rod.</text>
</comment>
<comment type="subcellular location">
    <subcellularLocation>
        <location evidence="1">Cell outer membrane</location>
        <topology evidence="1">Lipid-anchor</topology>
    </subcellularLocation>
    <subcellularLocation>
        <location evidence="1">Bacterial flagellum basal body</location>
    </subcellularLocation>
</comment>
<comment type="similarity">
    <text evidence="1">Belongs to the FlgH family.</text>
</comment>
<feature type="signal peptide" evidence="1">
    <location>
        <begin position="1"/>
        <end position="17"/>
    </location>
</feature>
<feature type="chain" id="PRO_1000050091" description="Flagellar L-ring protein">
    <location>
        <begin position="18"/>
        <end position="251"/>
    </location>
</feature>
<feature type="lipid moiety-binding region" description="N-palmitoyl cysteine" evidence="1">
    <location>
        <position position="18"/>
    </location>
</feature>
<feature type="lipid moiety-binding region" description="S-diacylglycerol cysteine" evidence="1">
    <location>
        <position position="18"/>
    </location>
</feature>
<dbReference type="EMBL" id="CP000449">
    <property type="protein sequence ID" value="ABI66241.1"/>
    <property type="molecule type" value="Genomic_DNA"/>
</dbReference>
<dbReference type="RefSeq" id="WP_011643886.1">
    <property type="nucleotide sequence ID" value="NC_008347.1"/>
</dbReference>
<dbReference type="SMR" id="Q0AN96"/>
<dbReference type="STRING" id="394221.Mmar10_1949"/>
<dbReference type="KEGG" id="mmr:Mmar10_1949"/>
<dbReference type="eggNOG" id="COG2063">
    <property type="taxonomic scope" value="Bacteria"/>
</dbReference>
<dbReference type="HOGENOM" id="CLU_069313_1_2_5"/>
<dbReference type="OrthoDB" id="9789227at2"/>
<dbReference type="Proteomes" id="UP000001964">
    <property type="component" value="Chromosome"/>
</dbReference>
<dbReference type="GO" id="GO:0009427">
    <property type="term" value="C:bacterial-type flagellum basal body, distal rod, L ring"/>
    <property type="evidence" value="ECO:0007669"/>
    <property type="project" value="InterPro"/>
</dbReference>
<dbReference type="GO" id="GO:0009279">
    <property type="term" value="C:cell outer membrane"/>
    <property type="evidence" value="ECO:0007669"/>
    <property type="project" value="UniProtKB-SubCell"/>
</dbReference>
<dbReference type="GO" id="GO:0003774">
    <property type="term" value="F:cytoskeletal motor activity"/>
    <property type="evidence" value="ECO:0007669"/>
    <property type="project" value="InterPro"/>
</dbReference>
<dbReference type="GO" id="GO:0071973">
    <property type="term" value="P:bacterial-type flagellum-dependent cell motility"/>
    <property type="evidence" value="ECO:0007669"/>
    <property type="project" value="InterPro"/>
</dbReference>
<dbReference type="HAMAP" id="MF_00415">
    <property type="entry name" value="FlgH"/>
    <property type="match status" value="1"/>
</dbReference>
<dbReference type="InterPro" id="IPR000527">
    <property type="entry name" value="Flag_Lring"/>
</dbReference>
<dbReference type="NCBIfam" id="NF001305">
    <property type="entry name" value="PRK00249.1-5"/>
    <property type="match status" value="1"/>
</dbReference>
<dbReference type="PANTHER" id="PTHR34933">
    <property type="entry name" value="FLAGELLAR L-RING PROTEIN"/>
    <property type="match status" value="1"/>
</dbReference>
<dbReference type="PANTHER" id="PTHR34933:SF1">
    <property type="entry name" value="FLAGELLAR L-RING PROTEIN"/>
    <property type="match status" value="1"/>
</dbReference>
<dbReference type="Pfam" id="PF02107">
    <property type="entry name" value="FlgH"/>
    <property type="match status" value="1"/>
</dbReference>
<dbReference type="PRINTS" id="PR01008">
    <property type="entry name" value="FLGLRINGFLGH"/>
</dbReference>
<dbReference type="PROSITE" id="PS51257">
    <property type="entry name" value="PROKAR_LIPOPROTEIN"/>
    <property type="match status" value="1"/>
</dbReference>